<evidence type="ECO:0000255" key="1"/>
<evidence type="ECO:0000269" key="2">
    <source>
    </source>
</evidence>
<evidence type="ECO:0000305" key="3"/>
<dbReference type="EMBL" id="AE004091">
    <property type="protein sequence ID" value="AAG08375.1"/>
    <property type="molecule type" value="Genomic_DNA"/>
</dbReference>
<dbReference type="PIR" id="C83021">
    <property type="entry name" value="C83021"/>
</dbReference>
<dbReference type="RefSeq" id="NP_253677.1">
    <property type="nucleotide sequence ID" value="NC_002516.2"/>
</dbReference>
<dbReference type="RefSeq" id="WP_003095735.1">
    <property type="nucleotide sequence ID" value="NZ_QZGE01000002.1"/>
</dbReference>
<dbReference type="SMR" id="Q9HUH5"/>
<dbReference type="FunCoup" id="Q9HUH5">
    <property type="interactions" value="165"/>
</dbReference>
<dbReference type="STRING" id="208964.PA4990"/>
<dbReference type="CARD" id="ARO:3004038">
    <property type="molecule name" value="Paer_emrE"/>
    <property type="mechanism identifier" value="ARO:0010000"/>
    <property type="mechanism name" value="antibiotic efflux"/>
</dbReference>
<dbReference type="PaxDb" id="208964-PA4990"/>
<dbReference type="DNASU" id="880147"/>
<dbReference type="GeneID" id="880147"/>
<dbReference type="KEGG" id="pae:PA4990"/>
<dbReference type="PATRIC" id="fig|208964.12.peg.5230"/>
<dbReference type="PseudoCAP" id="PA4990"/>
<dbReference type="HOGENOM" id="CLU_133067_0_2_6"/>
<dbReference type="InParanoid" id="Q9HUH5"/>
<dbReference type="OrthoDB" id="9808638at2"/>
<dbReference type="PhylomeDB" id="Q9HUH5"/>
<dbReference type="BioCyc" id="PAER208964:G1FZ6-5106-MONOMER"/>
<dbReference type="SABIO-RK" id="Q9HUH5"/>
<dbReference type="Proteomes" id="UP000002438">
    <property type="component" value="Chromosome"/>
</dbReference>
<dbReference type="GO" id="GO:0005886">
    <property type="term" value="C:plasma membrane"/>
    <property type="evidence" value="ECO:0000318"/>
    <property type="project" value="GO_Central"/>
</dbReference>
<dbReference type="GO" id="GO:0015199">
    <property type="term" value="F:amino-acid betaine transmembrane transporter activity"/>
    <property type="evidence" value="ECO:0000318"/>
    <property type="project" value="GO_Central"/>
</dbReference>
<dbReference type="GO" id="GO:0015297">
    <property type="term" value="F:antiporter activity"/>
    <property type="evidence" value="ECO:0000318"/>
    <property type="project" value="GO_Central"/>
</dbReference>
<dbReference type="GO" id="GO:0015220">
    <property type="term" value="F:choline transmembrane transporter activity"/>
    <property type="evidence" value="ECO:0000318"/>
    <property type="project" value="GO_Central"/>
</dbReference>
<dbReference type="GO" id="GO:0015871">
    <property type="term" value="P:choline transport"/>
    <property type="evidence" value="ECO:0000318"/>
    <property type="project" value="GO_Central"/>
</dbReference>
<dbReference type="GO" id="GO:0031460">
    <property type="term" value="P:glycine betaine transport"/>
    <property type="evidence" value="ECO:0000318"/>
    <property type="project" value="GO_Central"/>
</dbReference>
<dbReference type="GO" id="GO:0055085">
    <property type="term" value="P:transmembrane transport"/>
    <property type="evidence" value="ECO:0000318"/>
    <property type="project" value="GO_Central"/>
</dbReference>
<dbReference type="FunFam" id="1.10.3730.20:FF:000001">
    <property type="entry name" value="Quaternary ammonium compound resistance transporter SugE"/>
    <property type="match status" value="1"/>
</dbReference>
<dbReference type="Gene3D" id="1.10.3730.20">
    <property type="match status" value="1"/>
</dbReference>
<dbReference type="InterPro" id="IPR000390">
    <property type="entry name" value="Small_drug/metabolite_transptr"/>
</dbReference>
<dbReference type="InterPro" id="IPR045324">
    <property type="entry name" value="Small_multidrug_res"/>
</dbReference>
<dbReference type="PANTHER" id="PTHR30561:SF1">
    <property type="entry name" value="MULTIDRUG TRANSPORTER EMRE"/>
    <property type="match status" value="1"/>
</dbReference>
<dbReference type="PANTHER" id="PTHR30561">
    <property type="entry name" value="SMR FAMILY PROTON-DEPENDENT DRUG EFFLUX TRANSPORTER SUGE"/>
    <property type="match status" value="1"/>
</dbReference>
<dbReference type="Pfam" id="PF00893">
    <property type="entry name" value="Multi_Drug_Res"/>
    <property type="match status" value="1"/>
</dbReference>
<dbReference type="SUPFAM" id="SSF103481">
    <property type="entry name" value="Multidrug resistance efflux transporter EmrE"/>
    <property type="match status" value="1"/>
</dbReference>
<reference key="1">
    <citation type="journal article" date="2000" name="Nature">
        <title>Complete genome sequence of Pseudomonas aeruginosa PAO1, an opportunistic pathogen.</title>
        <authorList>
            <person name="Stover C.K."/>
            <person name="Pham X.-Q.T."/>
            <person name="Erwin A.L."/>
            <person name="Mizoguchi S.D."/>
            <person name="Warrener P."/>
            <person name="Hickey M.J."/>
            <person name="Brinkman F.S.L."/>
            <person name="Hufnagle W.O."/>
            <person name="Kowalik D.J."/>
            <person name="Lagrou M."/>
            <person name="Garber R.L."/>
            <person name="Goltry L."/>
            <person name="Tolentino E."/>
            <person name="Westbrock-Wadman S."/>
            <person name="Yuan Y."/>
            <person name="Brody L.L."/>
            <person name="Coulter S.N."/>
            <person name="Folger K.R."/>
            <person name="Kas A."/>
            <person name="Larbig K."/>
            <person name="Lim R.M."/>
            <person name="Smith K.A."/>
            <person name="Spencer D.H."/>
            <person name="Wong G.K.-S."/>
            <person name="Wu Z."/>
            <person name="Paulsen I.T."/>
            <person name="Reizer J."/>
            <person name="Saier M.H. Jr."/>
            <person name="Hancock R.E.W."/>
            <person name="Lory S."/>
            <person name="Olson M.V."/>
        </authorList>
    </citation>
    <scope>NUCLEOTIDE SEQUENCE [LARGE SCALE GENOMIC DNA]</scope>
    <source>
        <strain>ATCC 15692 / DSM 22644 / CIP 104116 / JCM 14847 / LMG 12228 / 1C / PRS 101 / PAO1</strain>
    </source>
</reference>
<reference key="2">
    <citation type="journal article" date="2001" name="J. Biol. Chem.">
        <title>Functional analysis of novel multidrug transporters from human pathogens.</title>
        <authorList>
            <person name="Ninio S."/>
            <person name="Rotem D."/>
            <person name="Schuldiner S."/>
        </authorList>
    </citation>
    <scope>FUNCTION</scope>
    <scope>BIOPHYSICOCHEMICAL PROPERTIES</scope>
    <scope>SUBCELLULAR LOCATION</scope>
</reference>
<name>MTDTR_PSEAE</name>
<accession>Q9HUH5</accession>
<proteinExistence type="evidence at protein level"/>
<sequence>MTNYLYLAIAIAAEVVATTSLKAVAGFSKPLPLLLVVGGYVLAFSMLVLVMRTLPVGVVYAIWSGLGIVLVSLVAMFVYGQRLDPAALLGIGLIIAGVLVIQLFSRASGH</sequence>
<comment type="function">
    <text evidence="2">Confers resistance to ethidium bromide, acriflavine and methyl viologen.</text>
</comment>
<comment type="biophysicochemical properties">
    <kinetics>
        <KM evidence="2">2426 uM for methyl viologen</KM>
        <Vmax evidence="2">4800.0 nmol/min/mg enzyme with methyl viologen as substrate</Vmax>
    </kinetics>
</comment>
<comment type="subcellular location">
    <subcellularLocation>
        <location evidence="2">Cell membrane</location>
        <topology evidence="2">Multi-pass membrane protein</topology>
    </subcellularLocation>
</comment>
<comment type="similarity">
    <text evidence="3">Belongs to the drug/metabolite transporter (DMT) superfamily. Small multidrug resistance (SMR) (TC 2.A.7.1) family.</text>
</comment>
<feature type="chain" id="PRO_0000425956" description="Multidrug transporter PA4990">
    <location>
        <begin position="1"/>
        <end position="110"/>
    </location>
</feature>
<feature type="transmembrane region" description="Helical" evidence="1">
    <location>
        <begin position="7"/>
        <end position="27"/>
    </location>
</feature>
<feature type="transmembrane region" description="Helical" evidence="1">
    <location>
        <begin position="31"/>
        <end position="51"/>
    </location>
</feature>
<feature type="transmembrane region" description="Helical" evidence="1">
    <location>
        <begin position="58"/>
        <end position="78"/>
    </location>
</feature>
<feature type="transmembrane region" description="Helical" evidence="1">
    <location>
        <begin position="85"/>
        <end position="105"/>
    </location>
</feature>
<organism>
    <name type="scientific">Pseudomonas aeruginosa (strain ATCC 15692 / DSM 22644 / CIP 104116 / JCM 14847 / LMG 12228 / 1C / PRS 101 / PAO1)</name>
    <dbReference type="NCBI Taxonomy" id="208964"/>
    <lineage>
        <taxon>Bacteria</taxon>
        <taxon>Pseudomonadati</taxon>
        <taxon>Pseudomonadota</taxon>
        <taxon>Gammaproteobacteria</taxon>
        <taxon>Pseudomonadales</taxon>
        <taxon>Pseudomonadaceae</taxon>
        <taxon>Pseudomonas</taxon>
    </lineage>
</organism>
<protein>
    <recommendedName>
        <fullName>Multidrug transporter PA4990</fullName>
    </recommendedName>
</protein>
<keyword id="KW-0050">Antiport</keyword>
<keyword id="KW-1003">Cell membrane</keyword>
<keyword id="KW-0472">Membrane</keyword>
<keyword id="KW-1185">Reference proteome</keyword>
<keyword id="KW-0812">Transmembrane</keyword>
<keyword id="KW-1133">Transmembrane helix</keyword>
<keyword id="KW-0813">Transport</keyword>
<gene>
    <name type="ordered locus">PA4990</name>
</gene>